<feature type="chain" id="PRO_0000144393" description="ATP synthase subunit alpha, chloroplastic">
    <location>
        <begin position="1"/>
        <end position="507"/>
    </location>
</feature>
<feature type="binding site" evidence="1">
    <location>
        <begin position="170"/>
        <end position="177"/>
    </location>
    <ligand>
        <name>ATP</name>
        <dbReference type="ChEBI" id="CHEBI:30616"/>
    </ligand>
</feature>
<feature type="site" description="Required for activity" evidence="1">
    <location>
        <position position="363"/>
    </location>
</feature>
<feature type="sequence conflict" description="In Ref. 2; CAA77341." evidence="3" ref="2">
    <original>L</original>
    <variation>P</variation>
    <location>
        <position position="288"/>
    </location>
</feature>
<keyword id="KW-0066">ATP synthesis</keyword>
<keyword id="KW-0067">ATP-binding</keyword>
<keyword id="KW-0139">CF(1)</keyword>
<keyword id="KW-0150">Chloroplast</keyword>
<keyword id="KW-0375">Hydrogen ion transport</keyword>
<keyword id="KW-0406">Ion transport</keyword>
<keyword id="KW-0472">Membrane</keyword>
<keyword id="KW-0547">Nucleotide-binding</keyword>
<keyword id="KW-0934">Plastid</keyword>
<keyword id="KW-1185">Reference proteome</keyword>
<keyword id="KW-0691">RNA editing</keyword>
<keyword id="KW-0793">Thylakoid</keyword>
<keyword id="KW-1278">Translocase</keyword>
<keyword id="KW-0813">Transport</keyword>
<name>ATPA_TOBAC</name>
<dbReference type="EC" id="7.1.2.2" evidence="1"/>
<dbReference type="EMBL" id="V00162">
    <property type="protein sequence ID" value="CAA23471.1"/>
    <property type="status" value="ALT_SEQ"/>
    <property type="molecule type" value="Genomic_DNA"/>
</dbReference>
<dbReference type="EMBL" id="Z00044">
    <property type="protein sequence ID" value="CAA77341.2"/>
    <property type="status" value="ALT_SEQ"/>
    <property type="molecule type" value="Genomic_DNA"/>
</dbReference>
<dbReference type="EMBL" id="K02396">
    <property type="protein sequence ID" value="AAA84694.1"/>
    <property type="molecule type" value="Genomic_DNA"/>
</dbReference>
<dbReference type="EMBL" id="M10124">
    <property type="protein sequence ID" value="AAA84684.1"/>
    <property type="molecule type" value="Genomic_DNA"/>
</dbReference>
<dbReference type="PIR" id="A01022">
    <property type="entry name" value="PWNTA"/>
</dbReference>
<dbReference type="RefSeq" id="NP_054481.2">
    <property type="nucleotide sequence ID" value="NC_001879.2"/>
</dbReference>
<dbReference type="SMR" id="P00823"/>
<dbReference type="ProMEX" id="P00823"/>
<dbReference type="GeneID" id="800492"/>
<dbReference type="KEGG" id="nta:800492"/>
<dbReference type="OrthoDB" id="1273573at2759"/>
<dbReference type="Proteomes" id="UP000084051">
    <property type="component" value="Unplaced"/>
</dbReference>
<dbReference type="GO" id="GO:0009535">
    <property type="term" value="C:chloroplast thylakoid membrane"/>
    <property type="evidence" value="ECO:0007669"/>
    <property type="project" value="UniProtKB-SubCell"/>
</dbReference>
<dbReference type="GO" id="GO:0045259">
    <property type="term" value="C:proton-transporting ATP synthase complex"/>
    <property type="evidence" value="ECO:0007669"/>
    <property type="project" value="UniProtKB-KW"/>
</dbReference>
<dbReference type="GO" id="GO:0005524">
    <property type="term" value="F:ATP binding"/>
    <property type="evidence" value="ECO:0007669"/>
    <property type="project" value="UniProtKB-UniRule"/>
</dbReference>
<dbReference type="GO" id="GO:0046933">
    <property type="term" value="F:proton-transporting ATP synthase activity, rotational mechanism"/>
    <property type="evidence" value="ECO:0007669"/>
    <property type="project" value="UniProtKB-UniRule"/>
</dbReference>
<dbReference type="CDD" id="cd18113">
    <property type="entry name" value="ATP-synt_F1_alpha_C"/>
    <property type="match status" value="1"/>
</dbReference>
<dbReference type="CDD" id="cd18116">
    <property type="entry name" value="ATP-synt_F1_alpha_N"/>
    <property type="match status" value="1"/>
</dbReference>
<dbReference type="CDD" id="cd01132">
    <property type="entry name" value="F1-ATPase_alpha_CD"/>
    <property type="match status" value="1"/>
</dbReference>
<dbReference type="FunFam" id="1.20.150.20:FF:000001">
    <property type="entry name" value="ATP synthase subunit alpha"/>
    <property type="match status" value="1"/>
</dbReference>
<dbReference type="FunFam" id="2.40.30.20:FF:000001">
    <property type="entry name" value="ATP synthase subunit alpha"/>
    <property type="match status" value="1"/>
</dbReference>
<dbReference type="FunFam" id="3.40.50.300:FF:000002">
    <property type="entry name" value="ATP synthase subunit alpha"/>
    <property type="match status" value="1"/>
</dbReference>
<dbReference type="Gene3D" id="2.40.30.20">
    <property type="match status" value="1"/>
</dbReference>
<dbReference type="Gene3D" id="1.20.150.20">
    <property type="entry name" value="ATP synthase alpha/beta chain, C-terminal domain"/>
    <property type="match status" value="1"/>
</dbReference>
<dbReference type="Gene3D" id="3.40.50.300">
    <property type="entry name" value="P-loop containing nucleotide triphosphate hydrolases"/>
    <property type="match status" value="1"/>
</dbReference>
<dbReference type="HAMAP" id="MF_01346">
    <property type="entry name" value="ATP_synth_alpha_bact"/>
    <property type="match status" value="1"/>
</dbReference>
<dbReference type="InterPro" id="IPR023366">
    <property type="entry name" value="ATP_synth_asu-like_sf"/>
</dbReference>
<dbReference type="InterPro" id="IPR000793">
    <property type="entry name" value="ATP_synth_asu_C"/>
</dbReference>
<dbReference type="InterPro" id="IPR038376">
    <property type="entry name" value="ATP_synth_asu_C_sf"/>
</dbReference>
<dbReference type="InterPro" id="IPR033732">
    <property type="entry name" value="ATP_synth_F1_a_nt-bd_dom"/>
</dbReference>
<dbReference type="InterPro" id="IPR005294">
    <property type="entry name" value="ATP_synth_F1_asu"/>
</dbReference>
<dbReference type="InterPro" id="IPR020003">
    <property type="entry name" value="ATPase_a/bsu_AS"/>
</dbReference>
<dbReference type="InterPro" id="IPR004100">
    <property type="entry name" value="ATPase_F1/V1/A1_a/bsu_N"/>
</dbReference>
<dbReference type="InterPro" id="IPR036121">
    <property type="entry name" value="ATPase_F1/V1/A1_a/bsu_N_sf"/>
</dbReference>
<dbReference type="InterPro" id="IPR000194">
    <property type="entry name" value="ATPase_F1/V1/A1_a/bsu_nucl-bd"/>
</dbReference>
<dbReference type="InterPro" id="IPR027417">
    <property type="entry name" value="P-loop_NTPase"/>
</dbReference>
<dbReference type="NCBIfam" id="TIGR00962">
    <property type="entry name" value="atpA"/>
    <property type="match status" value="1"/>
</dbReference>
<dbReference type="NCBIfam" id="NF009884">
    <property type="entry name" value="PRK13343.1"/>
    <property type="match status" value="1"/>
</dbReference>
<dbReference type="PANTHER" id="PTHR48082">
    <property type="entry name" value="ATP SYNTHASE SUBUNIT ALPHA, MITOCHONDRIAL"/>
    <property type="match status" value="1"/>
</dbReference>
<dbReference type="PANTHER" id="PTHR48082:SF2">
    <property type="entry name" value="ATP SYNTHASE SUBUNIT ALPHA, MITOCHONDRIAL"/>
    <property type="match status" value="1"/>
</dbReference>
<dbReference type="Pfam" id="PF00006">
    <property type="entry name" value="ATP-synt_ab"/>
    <property type="match status" value="1"/>
</dbReference>
<dbReference type="Pfam" id="PF00306">
    <property type="entry name" value="ATP-synt_ab_C"/>
    <property type="match status" value="1"/>
</dbReference>
<dbReference type="Pfam" id="PF02874">
    <property type="entry name" value="ATP-synt_ab_N"/>
    <property type="match status" value="1"/>
</dbReference>
<dbReference type="PIRSF" id="PIRSF039088">
    <property type="entry name" value="F_ATPase_subunit_alpha"/>
    <property type="match status" value="1"/>
</dbReference>
<dbReference type="SUPFAM" id="SSF47917">
    <property type="entry name" value="C-terminal domain of alpha and beta subunits of F1 ATP synthase"/>
    <property type="match status" value="1"/>
</dbReference>
<dbReference type="SUPFAM" id="SSF50615">
    <property type="entry name" value="N-terminal domain of alpha and beta subunits of F1 ATP synthase"/>
    <property type="match status" value="1"/>
</dbReference>
<dbReference type="SUPFAM" id="SSF52540">
    <property type="entry name" value="P-loop containing nucleoside triphosphate hydrolases"/>
    <property type="match status" value="1"/>
</dbReference>
<dbReference type="PROSITE" id="PS00152">
    <property type="entry name" value="ATPASE_ALPHA_BETA"/>
    <property type="match status" value="1"/>
</dbReference>
<comment type="function">
    <text>Produces ATP from ADP in the presence of a proton gradient across the membrane. The alpha chain is a regulatory subunit.</text>
</comment>
<comment type="catalytic activity">
    <reaction evidence="1">
        <text>ATP + H2O + 4 H(+)(in) = ADP + phosphate + 5 H(+)(out)</text>
        <dbReference type="Rhea" id="RHEA:57720"/>
        <dbReference type="ChEBI" id="CHEBI:15377"/>
        <dbReference type="ChEBI" id="CHEBI:15378"/>
        <dbReference type="ChEBI" id="CHEBI:30616"/>
        <dbReference type="ChEBI" id="CHEBI:43474"/>
        <dbReference type="ChEBI" id="CHEBI:456216"/>
        <dbReference type="EC" id="7.1.2.2"/>
    </reaction>
</comment>
<comment type="subunit">
    <text evidence="1">F-type ATPases have 2 components, CF(1) - the catalytic core - and CF(0) - the membrane proton channel. CF(1) has five subunits: alpha(3), beta(3), gamma(1), delta(1), epsilon(1). CF(0) has four main subunits: a, b, b' and c.</text>
</comment>
<comment type="subcellular location">
    <subcellularLocation>
        <location evidence="1">Plastid</location>
        <location evidence="1">Chloroplast thylakoid membrane</location>
        <topology evidence="1">Peripheral membrane protein</topology>
    </subcellularLocation>
</comment>
<comment type="RNA editing">
    <location>
        <position position="264" evidence="2"/>
    </location>
</comment>
<comment type="similarity">
    <text evidence="1">Belongs to the ATPase alpha/beta chains family.</text>
</comment>
<accession>P00823</accession>
<reference key="1">
    <citation type="journal article" date="1983" name="Nucleic Acids Res.">
        <title>Nucleotide sequence of tobacco chloroplast gene for the alpha subunit of proton-translocating ATPase.</title>
        <authorList>
            <person name="Deno H."/>
            <person name="Shinozaki K."/>
            <person name="Sugiura M."/>
        </authorList>
    </citation>
    <scope>NUCLEOTIDE SEQUENCE [GENOMIC DNA]</scope>
    <source>
        <strain>cv. Bright Yellow 4</strain>
    </source>
</reference>
<reference key="2">
    <citation type="journal article" date="1986" name="EMBO J.">
        <title>The complete nucleotide sequence of the tobacco chloroplast genome: its gene organization and expression.</title>
        <authorList>
            <person name="Shinozaki K."/>
            <person name="Ohme M."/>
            <person name="Tanaka M."/>
            <person name="Wakasugi T."/>
            <person name="Hayashida N."/>
            <person name="Matsubayashi T."/>
            <person name="Zaita N."/>
            <person name="Chunwongse J."/>
            <person name="Obokata J."/>
            <person name="Yamaguchi-Shinozaki K."/>
            <person name="Ohto C."/>
            <person name="Torazawa K."/>
            <person name="Meng B.-Y."/>
            <person name="Sugita M."/>
            <person name="Deno H."/>
            <person name="Kamogashira T."/>
            <person name="Yamada K."/>
            <person name="Kusuda J."/>
            <person name="Takaiwa F."/>
            <person name="Kato A."/>
            <person name="Tohdoh N."/>
            <person name="Shimada H."/>
            <person name="Sugiura M."/>
        </authorList>
    </citation>
    <scope>NUCLEOTIDE SEQUENCE [LARGE SCALE GENOMIC DNA]</scope>
    <source>
        <strain>cv. Bright Yellow 4</strain>
    </source>
</reference>
<reference key="3">
    <citation type="journal article" date="1984" name="Proc. Natl. Acad. Sci. U.S.A.">
        <title>Chloroplast tRNA-Gly gene contains a long intron in the D stem: nucleotide sequences of tobacco chloroplast genes for tRNA-Gly (UCC) and tRNA-Arg (UCU).</title>
        <authorList>
            <person name="Deno H."/>
            <person name="Sugiura M."/>
        </authorList>
    </citation>
    <scope>NUCLEOTIDE SEQUENCE [GENOMIC DNA] OF 463-507</scope>
    <source>
        <strain>cv. Bright Yellow 4</strain>
    </source>
</reference>
<reference key="4">
    <citation type="journal article" date="1984" name="Gene">
        <title>Structure and transcription pattern of a tobacco chloroplast gene coding for subunit III of proton-translocating ATPase.</title>
        <authorList>
            <person name="Deno H."/>
            <person name="Shinozaki K."/>
            <person name="Sugiura M."/>
        </authorList>
    </citation>
    <scope>NUCLEOTIDE SEQUENCE [GENOMIC DNA] OF 1-33</scope>
    <source>
        <strain>cv. Bright Yellow 4</strain>
    </source>
</reference>
<reference key="5">
    <citation type="journal article" date="1996" name="Plant Mol. Biol.">
        <title>Occurrence of silent RNA editing in chloroplasts: its species specificity and the influence of environmental and developmental conditions.</title>
        <authorList>
            <person name="Hirose T."/>
            <person name="Fan H."/>
            <person name="Suzuki J.Y."/>
            <person name="Wakasugi T."/>
            <person name="Tsudzuki T."/>
            <person name="Kossel H."/>
            <person name="Sugiura M."/>
        </authorList>
    </citation>
    <scope>RNA EDITING</scope>
</reference>
<organism>
    <name type="scientific">Nicotiana tabacum</name>
    <name type="common">Common tobacco</name>
    <dbReference type="NCBI Taxonomy" id="4097"/>
    <lineage>
        <taxon>Eukaryota</taxon>
        <taxon>Viridiplantae</taxon>
        <taxon>Streptophyta</taxon>
        <taxon>Embryophyta</taxon>
        <taxon>Tracheophyta</taxon>
        <taxon>Spermatophyta</taxon>
        <taxon>Magnoliopsida</taxon>
        <taxon>eudicotyledons</taxon>
        <taxon>Gunneridae</taxon>
        <taxon>Pentapetalae</taxon>
        <taxon>asterids</taxon>
        <taxon>lamiids</taxon>
        <taxon>Solanales</taxon>
        <taxon>Solanaceae</taxon>
        <taxon>Nicotianoideae</taxon>
        <taxon>Nicotianeae</taxon>
        <taxon>Nicotiana</taxon>
    </lineage>
</organism>
<proteinExistence type="evidence at transcript level"/>
<geneLocation type="chloroplast"/>
<protein>
    <recommendedName>
        <fullName evidence="1">ATP synthase subunit alpha, chloroplastic</fullName>
        <ecNumber evidence="1">7.1.2.2</ecNumber>
    </recommendedName>
    <alternativeName>
        <fullName evidence="1">ATP synthase F1 sector subunit alpha</fullName>
    </alternativeName>
    <alternativeName>
        <fullName evidence="1">F-ATPase subunit alpha</fullName>
    </alternativeName>
</protein>
<evidence type="ECO:0000255" key="1">
    <source>
        <dbReference type="HAMAP-Rule" id="MF_01346"/>
    </source>
</evidence>
<evidence type="ECO:0000269" key="2">
    <source>
    </source>
</evidence>
<evidence type="ECO:0000305" key="3"/>
<gene>
    <name evidence="1" type="primary">atpA</name>
</gene>
<sequence length="507" mass="55454">MVTIRADEISNIIRERIEQYNREVKIVNTGTVLQVGDGIARIHGLDEVMAGELVEFEEGTIGIALNLESNNVGVVLMGDGLLIQEGSSVKATGRIAQIPVSEAYLGRVINALAKPIDGRGEISASEFRLIESAAPGIISRRSVYEPLQTGLIAIDSMIPIGRGQRELIIGDRQTGKTAVATDTILNQQGQNVICVYVAIGQKASSVAQVVTTLQERGAMEYTIVVAETADSPATLQYLAPYTGAALAEYFMYRERHTLIIYDDLSKQAQAYRQMSLLLRRPPGREAYLGDVFYLHSRLLERAAKLSSSLGEGSMTALPIVETQSGDVSAYIPTNVISITDGQIFLSADLFNSGIRPAINVGISVSRVGSAAQIKAMKQVAGKLKLELAQFAELEAFAQFASDLDKATQNQLARGQRLRELLKQSQSAPLTVEEQIMTIYTGTNGYLDSLEVGQVRKFLVELRTYLKTNKPQFQEIISSTKTFTEEAEALLKEAIQEQMDRFILQEQA</sequence>